<evidence type="ECO:0000255" key="1">
    <source>
        <dbReference type="HAMAP-Rule" id="MF_00822"/>
    </source>
</evidence>
<evidence type="ECO:0000256" key="2">
    <source>
        <dbReference type="SAM" id="MobiDB-lite"/>
    </source>
</evidence>
<reference key="1">
    <citation type="journal article" date="2010" name="Genome Biol. Evol.">
        <title>Continuing evolution of Burkholderia mallei through genome reduction and large-scale rearrangements.</title>
        <authorList>
            <person name="Losada L."/>
            <person name="Ronning C.M."/>
            <person name="DeShazer D."/>
            <person name="Woods D."/>
            <person name="Fedorova N."/>
            <person name="Kim H.S."/>
            <person name="Shabalina S.A."/>
            <person name="Pearson T.R."/>
            <person name="Brinkac L."/>
            <person name="Tan P."/>
            <person name="Nandi T."/>
            <person name="Crabtree J."/>
            <person name="Badger J."/>
            <person name="Beckstrom-Sternberg S."/>
            <person name="Saqib M."/>
            <person name="Schutzer S.E."/>
            <person name="Keim P."/>
            <person name="Nierman W.C."/>
        </authorList>
    </citation>
    <scope>NUCLEOTIDE SEQUENCE [LARGE SCALE GENOMIC DNA]</scope>
    <source>
        <strain>1710b</strain>
    </source>
</reference>
<organism>
    <name type="scientific">Burkholderia pseudomallei (strain 1710b)</name>
    <dbReference type="NCBI Taxonomy" id="320372"/>
    <lineage>
        <taxon>Bacteria</taxon>
        <taxon>Pseudomonadati</taxon>
        <taxon>Pseudomonadota</taxon>
        <taxon>Betaproteobacteria</taxon>
        <taxon>Burkholderiales</taxon>
        <taxon>Burkholderiaceae</taxon>
        <taxon>Burkholderia</taxon>
        <taxon>pseudomallei group</taxon>
    </lineage>
</organism>
<comment type="function">
    <text evidence="1">Involved in urease metallocenter assembly. Binds nickel. Probably functions as a nickel donor during metallocenter assembly.</text>
</comment>
<comment type="subcellular location">
    <subcellularLocation>
        <location evidence="1">Cytoplasm</location>
    </subcellularLocation>
</comment>
<comment type="similarity">
    <text evidence="1">Belongs to the UreE family.</text>
</comment>
<sequence>MRTIDKRIAPNVRLAATLVARAPALTLAYDARCKSRLAATLDTGEDVALVLPRGTVLRDGDVLVADDGALVRVAAAHEAVLLVRAPDALTLTRAAYHLGNRHTPVEVGAGCLKLEYDPVLADMLTRLGATVERASAPFQPEAGAYGGGHRHGHDATFAEDYALAQQVFDEHHGHSHSRSHDHDHDHDHQHGPSCSHGHHHGHR</sequence>
<protein>
    <recommendedName>
        <fullName evidence="1">Urease accessory protein UreE</fullName>
    </recommendedName>
</protein>
<proteinExistence type="inferred from homology"/>
<keyword id="KW-0143">Chaperone</keyword>
<keyword id="KW-0963">Cytoplasm</keyword>
<keyword id="KW-0533">Nickel</keyword>
<keyword id="KW-0996">Nickel insertion</keyword>
<dbReference type="EMBL" id="CP000124">
    <property type="protein sequence ID" value="ABA48303.1"/>
    <property type="molecule type" value="Genomic_DNA"/>
</dbReference>
<dbReference type="RefSeq" id="WP_004527584.1">
    <property type="nucleotide sequence ID" value="NC_007434.1"/>
</dbReference>
<dbReference type="SMR" id="Q3JPJ5"/>
<dbReference type="EnsemblBacteria" id="ABA48303">
    <property type="protein sequence ID" value="ABA48303"/>
    <property type="gene ID" value="BURPS1710b_3136"/>
</dbReference>
<dbReference type="KEGG" id="bpm:BURPS1710b_3136"/>
<dbReference type="HOGENOM" id="CLU_093757_0_0_4"/>
<dbReference type="Proteomes" id="UP000002700">
    <property type="component" value="Chromosome I"/>
</dbReference>
<dbReference type="GO" id="GO:0005737">
    <property type="term" value="C:cytoplasm"/>
    <property type="evidence" value="ECO:0007669"/>
    <property type="project" value="UniProtKB-SubCell"/>
</dbReference>
<dbReference type="GO" id="GO:0016151">
    <property type="term" value="F:nickel cation binding"/>
    <property type="evidence" value="ECO:0007669"/>
    <property type="project" value="UniProtKB-UniRule"/>
</dbReference>
<dbReference type="GO" id="GO:0051082">
    <property type="term" value="F:unfolded protein binding"/>
    <property type="evidence" value="ECO:0007669"/>
    <property type="project" value="UniProtKB-UniRule"/>
</dbReference>
<dbReference type="GO" id="GO:0006457">
    <property type="term" value="P:protein folding"/>
    <property type="evidence" value="ECO:0007669"/>
    <property type="project" value="InterPro"/>
</dbReference>
<dbReference type="GO" id="GO:0065003">
    <property type="term" value="P:protein-containing complex assembly"/>
    <property type="evidence" value="ECO:0007669"/>
    <property type="project" value="InterPro"/>
</dbReference>
<dbReference type="GO" id="GO:0019627">
    <property type="term" value="P:urea metabolic process"/>
    <property type="evidence" value="ECO:0007669"/>
    <property type="project" value="InterPro"/>
</dbReference>
<dbReference type="CDD" id="cd00571">
    <property type="entry name" value="UreE"/>
    <property type="match status" value="1"/>
</dbReference>
<dbReference type="Gene3D" id="2.60.260.20">
    <property type="entry name" value="Urease metallochaperone UreE, N-terminal domain"/>
    <property type="match status" value="1"/>
</dbReference>
<dbReference type="Gene3D" id="3.30.70.790">
    <property type="entry name" value="UreE, C-terminal domain"/>
    <property type="match status" value="1"/>
</dbReference>
<dbReference type="HAMAP" id="MF_00822">
    <property type="entry name" value="UreE"/>
    <property type="match status" value="1"/>
</dbReference>
<dbReference type="InterPro" id="IPR012406">
    <property type="entry name" value="UreE"/>
</dbReference>
<dbReference type="InterPro" id="IPR007864">
    <property type="entry name" value="UreE_C_dom"/>
</dbReference>
<dbReference type="InterPro" id="IPR004029">
    <property type="entry name" value="UreE_N"/>
</dbReference>
<dbReference type="InterPro" id="IPR036118">
    <property type="entry name" value="UreE_N_sf"/>
</dbReference>
<dbReference type="NCBIfam" id="NF009751">
    <property type="entry name" value="PRK13261.1-1"/>
    <property type="match status" value="1"/>
</dbReference>
<dbReference type="NCBIfam" id="NF009762">
    <property type="entry name" value="PRK13263.1"/>
    <property type="match status" value="1"/>
</dbReference>
<dbReference type="Pfam" id="PF05194">
    <property type="entry name" value="UreE_C"/>
    <property type="match status" value="1"/>
</dbReference>
<dbReference type="Pfam" id="PF02814">
    <property type="entry name" value="UreE_N"/>
    <property type="match status" value="1"/>
</dbReference>
<dbReference type="SMART" id="SM00988">
    <property type="entry name" value="UreE_N"/>
    <property type="match status" value="1"/>
</dbReference>
<dbReference type="SUPFAM" id="SSF69737">
    <property type="entry name" value="Urease metallochaperone UreE, C-terminal domain"/>
    <property type="match status" value="1"/>
</dbReference>
<dbReference type="SUPFAM" id="SSF69287">
    <property type="entry name" value="Urease metallochaperone UreE, N-terminal domain"/>
    <property type="match status" value="1"/>
</dbReference>
<feature type="chain" id="PRO_1000083881" description="Urease accessory protein UreE">
    <location>
        <begin position="1"/>
        <end position="203"/>
    </location>
</feature>
<feature type="region of interest" description="Disordered" evidence="2">
    <location>
        <begin position="170"/>
        <end position="203"/>
    </location>
</feature>
<feature type="compositionally biased region" description="Basic and acidic residues" evidence="2">
    <location>
        <begin position="170"/>
        <end position="190"/>
    </location>
</feature>
<name>UREE_BURP1</name>
<gene>
    <name evidence="1" type="primary">ureE</name>
    <name type="ordered locus">BURPS1710b_3136</name>
</gene>
<accession>Q3JPJ5</accession>